<dbReference type="EC" id="4.1.1.37" evidence="1"/>
<dbReference type="EMBL" id="CP000097">
    <property type="protein sequence ID" value="ABB25884.1"/>
    <property type="molecule type" value="Genomic_DNA"/>
</dbReference>
<dbReference type="RefSeq" id="WP_011359720.1">
    <property type="nucleotide sequence ID" value="NC_007513.1"/>
</dbReference>
<dbReference type="SMR" id="Q3AYE3"/>
<dbReference type="STRING" id="316279.Syncc9902_0918"/>
<dbReference type="KEGG" id="sye:Syncc9902_0918"/>
<dbReference type="eggNOG" id="COG0407">
    <property type="taxonomic scope" value="Bacteria"/>
</dbReference>
<dbReference type="HOGENOM" id="CLU_040933_0_2_3"/>
<dbReference type="OrthoDB" id="9806656at2"/>
<dbReference type="UniPathway" id="UPA00251">
    <property type="reaction ID" value="UER00321"/>
</dbReference>
<dbReference type="Proteomes" id="UP000002712">
    <property type="component" value="Chromosome"/>
</dbReference>
<dbReference type="GO" id="GO:0005737">
    <property type="term" value="C:cytoplasm"/>
    <property type="evidence" value="ECO:0007669"/>
    <property type="project" value="UniProtKB-SubCell"/>
</dbReference>
<dbReference type="GO" id="GO:0004853">
    <property type="term" value="F:uroporphyrinogen decarboxylase activity"/>
    <property type="evidence" value="ECO:0007669"/>
    <property type="project" value="UniProtKB-UniRule"/>
</dbReference>
<dbReference type="GO" id="GO:0006782">
    <property type="term" value="P:protoporphyrinogen IX biosynthetic process"/>
    <property type="evidence" value="ECO:0007669"/>
    <property type="project" value="UniProtKB-UniRule"/>
</dbReference>
<dbReference type="CDD" id="cd00717">
    <property type="entry name" value="URO-D"/>
    <property type="match status" value="1"/>
</dbReference>
<dbReference type="FunFam" id="3.20.20.210:FF:000006">
    <property type="entry name" value="Uroporphyrinogen decarboxylase"/>
    <property type="match status" value="1"/>
</dbReference>
<dbReference type="Gene3D" id="3.20.20.210">
    <property type="match status" value="1"/>
</dbReference>
<dbReference type="HAMAP" id="MF_00218">
    <property type="entry name" value="URO_D"/>
    <property type="match status" value="1"/>
</dbReference>
<dbReference type="InterPro" id="IPR038071">
    <property type="entry name" value="UROD/MetE-like_sf"/>
</dbReference>
<dbReference type="InterPro" id="IPR006361">
    <property type="entry name" value="Uroporphyrinogen_deCO2ase_HemE"/>
</dbReference>
<dbReference type="InterPro" id="IPR000257">
    <property type="entry name" value="Uroporphyrinogen_deCOase"/>
</dbReference>
<dbReference type="NCBIfam" id="TIGR01464">
    <property type="entry name" value="hemE"/>
    <property type="match status" value="1"/>
</dbReference>
<dbReference type="PANTHER" id="PTHR21091">
    <property type="entry name" value="METHYLTETRAHYDROFOLATE:HOMOCYSTEINE METHYLTRANSFERASE RELATED"/>
    <property type="match status" value="1"/>
</dbReference>
<dbReference type="PANTHER" id="PTHR21091:SF169">
    <property type="entry name" value="UROPORPHYRINOGEN DECARBOXYLASE"/>
    <property type="match status" value="1"/>
</dbReference>
<dbReference type="Pfam" id="PF01208">
    <property type="entry name" value="URO-D"/>
    <property type="match status" value="1"/>
</dbReference>
<dbReference type="SUPFAM" id="SSF51726">
    <property type="entry name" value="UROD/MetE-like"/>
    <property type="match status" value="1"/>
</dbReference>
<dbReference type="PROSITE" id="PS00906">
    <property type="entry name" value="UROD_1"/>
    <property type="match status" value="1"/>
</dbReference>
<dbReference type="PROSITE" id="PS00907">
    <property type="entry name" value="UROD_2"/>
    <property type="match status" value="1"/>
</dbReference>
<gene>
    <name evidence="1" type="primary">hemE</name>
    <name type="ordered locus">Syncc9902_0918</name>
</gene>
<sequence>MSDTLPLLLRAARGESVERPPVWMMRQAGRYMKIYRDLRDKYPSFRERSENPDLSYEISMQPFEAFQPDGVILFSDILTPLPGMGIDFDIIESKGPQIGDPIRSMEQVKALRPLNPAESMPFVGEVLGRLRKTVGNQAAVLGFVGAPWTLAAYVVEGKSSKNYAVIKAMAFREPELLHTLLNHFAESIANYLRYQIDSGAQVVQMFDSWAGQLSPADYDTFAAPYQKKVVDLVKQTHPDTPFVLYISGSAGVLERMARTGVDIISLDWTVDMAEACARLPEHIGVQGNVDPGLLFGTPDAIQARIDDTVRKARGRRHILNLGHGILPGTPEENGAAFFRSGKSVMDRIGTLA</sequence>
<proteinExistence type="inferred from homology"/>
<organism>
    <name type="scientific">Synechococcus sp. (strain CC9902)</name>
    <dbReference type="NCBI Taxonomy" id="316279"/>
    <lineage>
        <taxon>Bacteria</taxon>
        <taxon>Bacillati</taxon>
        <taxon>Cyanobacteriota</taxon>
        <taxon>Cyanophyceae</taxon>
        <taxon>Synechococcales</taxon>
        <taxon>Synechococcaceae</taxon>
        <taxon>Synechococcus</taxon>
    </lineage>
</organism>
<name>DCUP_SYNS9</name>
<evidence type="ECO:0000255" key="1">
    <source>
        <dbReference type="HAMAP-Rule" id="MF_00218"/>
    </source>
</evidence>
<protein>
    <recommendedName>
        <fullName evidence="1">Uroporphyrinogen decarboxylase</fullName>
        <shortName evidence="1">UPD</shortName>
        <shortName evidence="1">URO-D</shortName>
        <ecNumber evidence="1">4.1.1.37</ecNumber>
    </recommendedName>
</protein>
<feature type="chain" id="PRO_1000023992" description="Uroporphyrinogen decarboxylase">
    <location>
        <begin position="1"/>
        <end position="352"/>
    </location>
</feature>
<feature type="binding site" evidence="1">
    <location>
        <begin position="26"/>
        <end position="30"/>
    </location>
    <ligand>
        <name>substrate</name>
    </ligand>
</feature>
<feature type="binding site" evidence="1">
    <location>
        <position position="76"/>
    </location>
    <ligand>
        <name>substrate</name>
    </ligand>
</feature>
<feature type="binding site" evidence="1">
    <location>
        <position position="153"/>
    </location>
    <ligand>
        <name>substrate</name>
    </ligand>
</feature>
<feature type="binding site" evidence="1">
    <location>
        <position position="208"/>
    </location>
    <ligand>
        <name>substrate</name>
    </ligand>
</feature>
<feature type="binding site" evidence="1">
    <location>
        <position position="323"/>
    </location>
    <ligand>
        <name>substrate</name>
    </ligand>
</feature>
<feature type="site" description="Transition state stabilizer" evidence="1">
    <location>
        <position position="76"/>
    </location>
</feature>
<reference key="1">
    <citation type="submission" date="2005-08" db="EMBL/GenBank/DDBJ databases">
        <title>Complete sequence of Synechococcus sp. CC9902.</title>
        <authorList>
            <person name="Copeland A."/>
            <person name="Lucas S."/>
            <person name="Lapidus A."/>
            <person name="Barry K."/>
            <person name="Detter J.C."/>
            <person name="Glavina T."/>
            <person name="Hammon N."/>
            <person name="Israni S."/>
            <person name="Pitluck S."/>
            <person name="Martinez M."/>
            <person name="Schmutz J."/>
            <person name="Larimer F."/>
            <person name="Land M."/>
            <person name="Kyrpides N."/>
            <person name="Ivanova N."/>
            <person name="Richardson P."/>
        </authorList>
    </citation>
    <scope>NUCLEOTIDE SEQUENCE [LARGE SCALE GENOMIC DNA]</scope>
    <source>
        <strain>CC9902</strain>
    </source>
</reference>
<keyword id="KW-0963">Cytoplasm</keyword>
<keyword id="KW-0210">Decarboxylase</keyword>
<keyword id="KW-0456">Lyase</keyword>
<keyword id="KW-0627">Porphyrin biosynthesis</keyword>
<keyword id="KW-1185">Reference proteome</keyword>
<accession>Q3AYE3</accession>
<comment type="function">
    <text evidence="1">Catalyzes the decarboxylation of four acetate groups of uroporphyrinogen-III to yield coproporphyrinogen-III.</text>
</comment>
<comment type="catalytic activity">
    <reaction evidence="1">
        <text>uroporphyrinogen III + 4 H(+) = coproporphyrinogen III + 4 CO2</text>
        <dbReference type="Rhea" id="RHEA:19865"/>
        <dbReference type="ChEBI" id="CHEBI:15378"/>
        <dbReference type="ChEBI" id="CHEBI:16526"/>
        <dbReference type="ChEBI" id="CHEBI:57308"/>
        <dbReference type="ChEBI" id="CHEBI:57309"/>
        <dbReference type="EC" id="4.1.1.37"/>
    </reaction>
</comment>
<comment type="pathway">
    <text evidence="1">Porphyrin-containing compound metabolism; protoporphyrin-IX biosynthesis; coproporphyrinogen-III from 5-aminolevulinate: step 4/4.</text>
</comment>
<comment type="subunit">
    <text evidence="1">Homodimer.</text>
</comment>
<comment type="subcellular location">
    <subcellularLocation>
        <location evidence="1">Cytoplasm</location>
    </subcellularLocation>
</comment>
<comment type="similarity">
    <text evidence="1">Belongs to the uroporphyrinogen decarboxylase family.</text>
</comment>